<feature type="chain" id="PRO_1000142163" description="Large ribosomal subunit protein uL4">
    <location>
        <begin position="1"/>
        <end position="210"/>
    </location>
</feature>
<gene>
    <name evidence="1" type="primary">rplD</name>
    <name type="ordered locus">OTT_1045</name>
</gene>
<organism>
    <name type="scientific">Orientia tsutsugamushi (strain Ikeda)</name>
    <name type="common">Rickettsia tsutsugamushi</name>
    <dbReference type="NCBI Taxonomy" id="334380"/>
    <lineage>
        <taxon>Bacteria</taxon>
        <taxon>Pseudomonadati</taxon>
        <taxon>Pseudomonadota</taxon>
        <taxon>Alphaproteobacteria</taxon>
        <taxon>Rickettsiales</taxon>
        <taxon>Rickettsiaceae</taxon>
        <taxon>Rickettsieae</taxon>
        <taxon>Orientia</taxon>
    </lineage>
</organism>
<proteinExistence type="inferred from homology"/>
<dbReference type="EMBL" id="AP008981">
    <property type="protein sequence ID" value="BAG40503.1"/>
    <property type="molecule type" value="Genomic_DNA"/>
</dbReference>
<dbReference type="RefSeq" id="WP_011944439.1">
    <property type="nucleotide sequence ID" value="NC_010793.1"/>
</dbReference>
<dbReference type="SMR" id="B3CT06"/>
<dbReference type="KEGG" id="ott:OTT_1045"/>
<dbReference type="HOGENOM" id="CLU_041575_5_1_5"/>
<dbReference type="OrthoDB" id="9803201at2"/>
<dbReference type="Proteomes" id="UP000001033">
    <property type="component" value="Chromosome"/>
</dbReference>
<dbReference type="GO" id="GO:1990904">
    <property type="term" value="C:ribonucleoprotein complex"/>
    <property type="evidence" value="ECO:0007669"/>
    <property type="project" value="UniProtKB-KW"/>
</dbReference>
<dbReference type="GO" id="GO:0005840">
    <property type="term" value="C:ribosome"/>
    <property type="evidence" value="ECO:0007669"/>
    <property type="project" value="UniProtKB-KW"/>
</dbReference>
<dbReference type="GO" id="GO:0019843">
    <property type="term" value="F:rRNA binding"/>
    <property type="evidence" value="ECO:0007669"/>
    <property type="project" value="UniProtKB-UniRule"/>
</dbReference>
<dbReference type="GO" id="GO:0003735">
    <property type="term" value="F:structural constituent of ribosome"/>
    <property type="evidence" value="ECO:0007669"/>
    <property type="project" value="InterPro"/>
</dbReference>
<dbReference type="GO" id="GO:0006412">
    <property type="term" value="P:translation"/>
    <property type="evidence" value="ECO:0007669"/>
    <property type="project" value="UniProtKB-UniRule"/>
</dbReference>
<dbReference type="Gene3D" id="3.40.1370.10">
    <property type="match status" value="1"/>
</dbReference>
<dbReference type="HAMAP" id="MF_01328_B">
    <property type="entry name" value="Ribosomal_uL4_B"/>
    <property type="match status" value="1"/>
</dbReference>
<dbReference type="InterPro" id="IPR002136">
    <property type="entry name" value="Ribosomal_uL4"/>
</dbReference>
<dbReference type="InterPro" id="IPR013005">
    <property type="entry name" value="Ribosomal_uL4-like"/>
</dbReference>
<dbReference type="InterPro" id="IPR023574">
    <property type="entry name" value="Ribosomal_uL4_dom_sf"/>
</dbReference>
<dbReference type="NCBIfam" id="TIGR03953">
    <property type="entry name" value="rplD_bact"/>
    <property type="match status" value="1"/>
</dbReference>
<dbReference type="PANTHER" id="PTHR10746">
    <property type="entry name" value="50S RIBOSOMAL PROTEIN L4"/>
    <property type="match status" value="1"/>
</dbReference>
<dbReference type="PANTHER" id="PTHR10746:SF6">
    <property type="entry name" value="LARGE RIBOSOMAL SUBUNIT PROTEIN UL4M"/>
    <property type="match status" value="1"/>
</dbReference>
<dbReference type="Pfam" id="PF00573">
    <property type="entry name" value="Ribosomal_L4"/>
    <property type="match status" value="1"/>
</dbReference>
<dbReference type="SUPFAM" id="SSF52166">
    <property type="entry name" value="Ribosomal protein L4"/>
    <property type="match status" value="1"/>
</dbReference>
<keyword id="KW-0687">Ribonucleoprotein</keyword>
<keyword id="KW-0689">Ribosomal protein</keyword>
<keyword id="KW-0694">RNA-binding</keyword>
<keyword id="KW-0699">rRNA-binding</keyword>
<reference key="1">
    <citation type="journal article" date="2008" name="DNA Res.">
        <title>The whole-genome sequencing of the obligate intracellular bacterium Orientia tsutsugamushi revealed massive gene amplification during reductive genome evolution.</title>
        <authorList>
            <person name="Nakayama K."/>
            <person name="Yamashita A."/>
            <person name="Kurokawa K."/>
            <person name="Morimoto T."/>
            <person name="Ogawa M."/>
            <person name="Fukuhara M."/>
            <person name="Urakami H."/>
            <person name="Ohnishi M."/>
            <person name="Uchiyama I."/>
            <person name="Ogura Y."/>
            <person name="Ooka T."/>
            <person name="Oshima K."/>
            <person name="Tamura A."/>
            <person name="Hattori M."/>
            <person name="Hayashi T."/>
        </authorList>
    </citation>
    <scope>NUCLEOTIDE SEQUENCE [LARGE SCALE GENOMIC DNA]</scope>
    <source>
        <strain>Ikeda</strain>
    </source>
</reference>
<evidence type="ECO:0000255" key="1">
    <source>
        <dbReference type="HAMAP-Rule" id="MF_01328"/>
    </source>
</evidence>
<evidence type="ECO:0000305" key="2"/>
<accession>B3CT06</accession>
<name>RL4_ORITI</name>
<sequence length="210" mass="23697">MKVKVYNLLQEIEKEVELNPSVFCLKYRPDIIKLVIDWQLAKRMSGTHCTKTISGVSGTTKKPFKQKGTGNARQGSLRSVQMRGGGISHGPVVRSHEFDVPKKIRKQALKYALSYKLSVNKLIVVDDFNIGSNKTAVLKNLLKKYNYSNYSGFFCIDDQNVDRNFFLASRNLFNLNVVAQIGANPYDIMKHDCVMVTLSAAKSLEMRLAE</sequence>
<comment type="function">
    <text evidence="1">One of the primary rRNA binding proteins, this protein initially binds near the 5'-end of the 23S rRNA. It is important during the early stages of 50S assembly. It makes multiple contacts with different domains of the 23S rRNA in the assembled 50S subunit and ribosome.</text>
</comment>
<comment type="function">
    <text evidence="1">Forms part of the polypeptide exit tunnel.</text>
</comment>
<comment type="subunit">
    <text evidence="1">Part of the 50S ribosomal subunit.</text>
</comment>
<comment type="similarity">
    <text evidence="1">Belongs to the universal ribosomal protein uL4 family.</text>
</comment>
<protein>
    <recommendedName>
        <fullName evidence="1">Large ribosomal subunit protein uL4</fullName>
    </recommendedName>
    <alternativeName>
        <fullName evidence="2">50S ribosomal protein L4</fullName>
    </alternativeName>
</protein>